<accession>A8GQJ1</accession>
<reference key="1">
    <citation type="submission" date="2007-09" db="EMBL/GenBank/DDBJ databases">
        <title>Complete genome sequence of Rickettsia rickettsii.</title>
        <authorList>
            <person name="Madan A."/>
            <person name="Fahey J."/>
            <person name="Helton E."/>
            <person name="Ketteman M."/>
            <person name="Madan A."/>
            <person name="Rodrigues S."/>
            <person name="Sanchez A."/>
            <person name="Dasch G."/>
            <person name="Eremeeva M."/>
        </authorList>
    </citation>
    <scope>NUCLEOTIDE SEQUENCE [LARGE SCALE GENOMIC DNA]</scope>
    <source>
        <strain>Sheila Smith</strain>
    </source>
</reference>
<dbReference type="EC" id="2.3.1.234" evidence="1"/>
<dbReference type="EMBL" id="CP000848">
    <property type="protein sequence ID" value="ABV75666.1"/>
    <property type="molecule type" value="Genomic_DNA"/>
</dbReference>
<dbReference type="RefSeq" id="WP_012150289.1">
    <property type="nucleotide sequence ID" value="NZ_CP121767.1"/>
</dbReference>
<dbReference type="SMR" id="A8GQJ1"/>
<dbReference type="GeneID" id="79936864"/>
<dbReference type="KEGG" id="rri:A1G_00390"/>
<dbReference type="HOGENOM" id="CLU_023208_0_2_5"/>
<dbReference type="Proteomes" id="UP000006832">
    <property type="component" value="Chromosome"/>
</dbReference>
<dbReference type="GO" id="GO:0005737">
    <property type="term" value="C:cytoplasm"/>
    <property type="evidence" value="ECO:0007669"/>
    <property type="project" value="UniProtKB-SubCell"/>
</dbReference>
<dbReference type="GO" id="GO:0005506">
    <property type="term" value="F:iron ion binding"/>
    <property type="evidence" value="ECO:0007669"/>
    <property type="project" value="UniProtKB-UniRule"/>
</dbReference>
<dbReference type="GO" id="GO:0061711">
    <property type="term" value="F:N(6)-L-threonylcarbamoyladenine synthase activity"/>
    <property type="evidence" value="ECO:0007669"/>
    <property type="project" value="UniProtKB-EC"/>
</dbReference>
<dbReference type="GO" id="GO:0002949">
    <property type="term" value="P:tRNA threonylcarbamoyladenosine modification"/>
    <property type="evidence" value="ECO:0007669"/>
    <property type="project" value="UniProtKB-UniRule"/>
</dbReference>
<dbReference type="CDD" id="cd24133">
    <property type="entry name" value="ASKHA_NBD_TsaD_bac"/>
    <property type="match status" value="1"/>
</dbReference>
<dbReference type="FunFam" id="3.30.420.40:FF:000040">
    <property type="entry name" value="tRNA N6-adenosine threonylcarbamoyltransferase"/>
    <property type="match status" value="1"/>
</dbReference>
<dbReference type="Gene3D" id="3.30.420.40">
    <property type="match status" value="2"/>
</dbReference>
<dbReference type="HAMAP" id="MF_01445">
    <property type="entry name" value="TsaD"/>
    <property type="match status" value="1"/>
</dbReference>
<dbReference type="InterPro" id="IPR043129">
    <property type="entry name" value="ATPase_NBD"/>
</dbReference>
<dbReference type="InterPro" id="IPR000905">
    <property type="entry name" value="Gcp-like_dom"/>
</dbReference>
<dbReference type="InterPro" id="IPR017861">
    <property type="entry name" value="KAE1/TsaD"/>
</dbReference>
<dbReference type="InterPro" id="IPR017860">
    <property type="entry name" value="Peptidase_M22_CS"/>
</dbReference>
<dbReference type="InterPro" id="IPR022450">
    <property type="entry name" value="TsaD"/>
</dbReference>
<dbReference type="NCBIfam" id="TIGR00329">
    <property type="entry name" value="gcp_kae1"/>
    <property type="match status" value="1"/>
</dbReference>
<dbReference type="NCBIfam" id="TIGR03723">
    <property type="entry name" value="T6A_TsaD_YgjD"/>
    <property type="match status" value="1"/>
</dbReference>
<dbReference type="PANTHER" id="PTHR11735">
    <property type="entry name" value="TRNA N6-ADENOSINE THREONYLCARBAMOYLTRANSFERASE"/>
    <property type="match status" value="1"/>
</dbReference>
<dbReference type="PANTHER" id="PTHR11735:SF6">
    <property type="entry name" value="TRNA N6-ADENOSINE THREONYLCARBAMOYLTRANSFERASE, MITOCHONDRIAL"/>
    <property type="match status" value="1"/>
</dbReference>
<dbReference type="Pfam" id="PF00814">
    <property type="entry name" value="TsaD"/>
    <property type="match status" value="1"/>
</dbReference>
<dbReference type="PRINTS" id="PR00789">
    <property type="entry name" value="OSIALOPTASE"/>
</dbReference>
<dbReference type="SUPFAM" id="SSF53067">
    <property type="entry name" value="Actin-like ATPase domain"/>
    <property type="match status" value="2"/>
</dbReference>
<dbReference type="PROSITE" id="PS01016">
    <property type="entry name" value="GLYCOPROTEASE"/>
    <property type="match status" value="1"/>
</dbReference>
<keyword id="KW-0012">Acyltransferase</keyword>
<keyword id="KW-0963">Cytoplasm</keyword>
<keyword id="KW-0408">Iron</keyword>
<keyword id="KW-0479">Metal-binding</keyword>
<keyword id="KW-0808">Transferase</keyword>
<keyword id="KW-0819">tRNA processing</keyword>
<gene>
    <name evidence="1" type="primary">tsaD</name>
    <name type="synonym">gcp</name>
    <name type="ordered locus">A1G_00390</name>
</gene>
<evidence type="ECO:0000255" key="1">
    <source>
        <dbReference type="HAMAP-Rule" id="MF_01445"/>
    </source>
</evidence>
<protein>
    <recommendedName>
        <fullName evidence="1">tRNA N6-adenosine threonylcarbamoyltransferase</fullName>
        <ecNumber evidence="1">2.3.1.234</ecNumber>
    </recommendedName>
    <alternativeName>
        <fullName evidence="1">N6-L-threonylcarbamoyladenine synthase</fullName>
        <shortName evidence="1">t(6)A synthase</shortName>
    </alternativeName>
    <alternativeName>
        <fullName evidence="1">t(6)A37 threonylcarbamoyladenosine biosynthesis protein TsaD</fullName>
    </alternativeName>
    <alternativeName>
        <fullName evidence="1">tRNA threonylcarbamoyladenosine biosynthesis protein TsaD</fullName>
    </alternativeName>
</protein>
<name>TSAD_RICRS</name>
<organism>
    <name type="scientific">Rickettsia rickettsii (strain Sheila Smith)</name>
    <dbReference type="NCBI Taxonomy" id="392021"/>
    <lineage>
        <taxon>Bacteria</taxon>
        <taxon>Pseudomonadati</taxon>
        <taxon>Pseudomonadota</taxon>
        <taxon>Alphaproteobacteria</taxon>
        <taxon>Rickettsiales</taxon>
        <taxon>Rickettsiaceae</taxon>
        <taxon>Rickettsieae</taxon>
        <taxon>Rickettsia</taxon>
        <taxon>spotted fever group</taxon>
    </lineage>
</organism>
<proteinExistence type="inferred from homology"/>
<feature type="chain" id="PRO_1000024447" description="tRNA N6-adenosine threonylcarbamoyltransferase">
    <location>
        <begin position="1"/>
        <end position="344"/>
    </location>
</feature>
<feature type="binding site" evidence="1">
    <location>
        <position position="112"/>
    </location>
    <ligand>
        <name>Fe cation</name>
        <dbReference type="ChEBI" id="CHEBI:24875"/>
    </ligand>
</feature>
<feature type="binding site" evidence="1">
    <location>
        <position position="116"/>
    </location>
    <ligand>
        <name>Fe cation</name>
        <dbReference type="ChEBI" id="CHEBI:24875"/>
    </ligand>
</feature>
<feature type="binding site" evidence="1">
    <location>
        <begin position="134"/>
        <end position="138"/>
    </location>
    <ligand>
        <name>substrate</name>
    </ligand>
</feature>
<feature type="binding site" evidence="1">
    <location>
        <position position="167"/>
    </location>
    <ligand>
        <name>substrate</name>
    </ligand>
</feature>
<feature type="binding site" evidence="1">
    <location>
        <position position="180"/>
    </location>
    <ligand>
        <name>substrate</name>
    </ligand>
</feature>
<feature type="binding site" evidence="1">
    <location>
        <position position="280"/>
    </location>
    <ligand>
        <name>substrate</name>
    </ligand>
</feature>
<feature type="binding site" evidence="1">
    <location>
        <position position="308"/>
    </location>
    <ligand>
        <name>Fe cation</name>
        <dbReference type="ChEBI" id="CHEBI:24875"/>
    </ligand>
</feature>
<sequence length="344" mass="37299">MIKILGIESSCDDTAVSIITENREILSNIIISQNTEHAVFGGVVPEIAARSHLSHLDKALKNVLKESNTKLTDISTIAATSGPGLIGGVIVGSMFARSLSSALKKPFIAINHLEGHALTARLTDNIPYPYLLLLASGGHCQFVAVLGLGKYKILGSTIDDAVGEAFDKVAKMLNLAFPGGPEIEKRAKLGDPHKYKFPKPIINSGNCNMSFSGLKTAVRTLIMNLKEINDTVINDIAASFQFTIGEILSSKVQDAIRAYEQITNNFDKKNIVIAGGVAANKYLQKILSSCAKTYGYRLIYPPIHLCTDNAAMIAYAGLERYNNKLFTPLNFSPKARWSLEDISN</sequence>
<comment type="function">
    <text evidence="1">Required for the formation of a threonylcarbamoyl group on adenosine at position 37 (t(6)A37) in tRNAs that read codons beginning with adenine. Is involved in the transfer of the threonylcarbamoyl moiety of threonylcarbamoyl-AMP (TC-AMP) to the N6 group of A37, together with TsaE and TsaB. TsaD likely plays a direct catalytic role in this reaction.</text>
</comment>
<comment type="catalytic activity">
    <reaction evidence="1">
        <text>L-threonylcarbamoyladenylate + adenosine(37) in tRNA = N(6)-L-threonylcarbamoyladenosine(37) in tRNA + AMP + H(+)</text>
        <dbReference type="Rhea" id="RHEA:37059"/>
        <dbReference type="Rhea" id="RHEA-COMP:10162"/>
        <dbReference type="Rhea" id="RHEA-COMP:10163"/>
        <dbReference type="ChEBI" id="CHEBI:15378"/>
        <dbReference type="ChEBI" id="CHEBI:73682"/>
        <dbReference type="ChEBI" id="CHEBI:74411"/>
        <dbReference type="ChEBI" id="CHEBI:74418"/>
        <dbReference type="ChEBI" id="CHEBI:456215"/>
        <dbReference type="EC" id="2.3.1.234"/>
    </reaction>
</comment>
<comment type="cofactor">
    <cofactor evidence="1">
        <name>Fe(2+)</name>
        <dbReference type="ChEBI" id="CHEBI:29033"/>
    </cofactor>
    <text evidence="1">Binds 1 Fe(2+) ion per subunit.</text>
</comment>
<comment type="subcellular location">
    <subcellularLocation>
        <location evidence="1">Cytoplasm</location>
    </subcellularLocation>
</comment>
<comment type="similarity">
    <text evidence="1">Belongs to the KAE1 / TsaD family.</text>
</comment>